<organism>
    <name type="scientific">Aliivibrio salmonicida (strain LFI1238)</name>
    <name type="common">Vibrio salmonicida (strain LFI1238)</name>
    <dbReference type="NCBI Taxonomy" id="316275"/>
    <lineage>
        <taxon>Bacteria</taxon>
        <taxon>Pseudomonadati</taxon>
        <taxon>Pseudomonadota</taxon>
        <taxon>Gammaproteobacteria</taxon>
        <taxon>Vibrionales</taxon>
        <taxon>Vibrionaceae</taxon>
        <taxon>Aliivibrio</taxon>
    </lineage>
</organism>
<sequence length="288" mass="31783">MITTATRWPSPAKLNLFLYINGQHDNGYHELQTLFQFIDLCDHLTITPNDSGEITLSPPIPGVEKKDNLIWKAATQLQEHTLCPLGAHIELEKILPIGGGIGGGSSNAATTLVALNFLWDLNLTNKELADLGVTLGADVPIFVHGFSAFAEGIGEKLQPANPKELWYVLIKPEVSIATVDVFSHPELIRNTAKQPLNVLLSASYENDCEKIVRRVYPEVDYQLSWLLEYAPSRLTGTGACVFAEFINEKEAQHVFSLIPDNATGFITRGRNTSPLNQALEEYKSLCNI</sequence>
<dbReference type="EC" id="2.7.1.148" evidence="1"/>
<dbReference type="EMBL" id="FM178379">
    <property type="protein sequence ID" value="CAQ78472.1"/>
    <property type="molecule type" value="Genomic_DNA"/>
</dbReference>
<dbReference type="RefSeq" id="WP_012549580.1">
    <property type="nucleotide sequence ID" value="NC_011312.1"/>
</dbReference>
<dbReference type="SMR" id="B6EHH2"/>
<dbReference type="KEGG" id="vsa:VSAL_I0787"/>
<dbReference type="eggNOG" id="COG1947">
    <property type="taxonomic scope" value="Bacteria"/>
</dbReference>
<dbReference type="HOGENOM" id="CLU_053057_3_0_6"/>
<dbReference type="UniPathway" id="UPA00056">
    <property type="reaction ID" value="UER00094"/>
</dbReference>
<dbReference type="Proteomes" id="UP000001730">
    <property type="component" value="Chromosome 1"/>
</dbReference>
<dbReference type="GO" id="GO:0050515">
    <property type="term" value="F:4-(cytidine 5'-diphospho)-2-C-methyl-D-erythritol kinase activity"/>
    <property type="evidence" value="ECO:0007669"/>
    <property type="project" value="UniProtKB-UniRule"/>
</dbReference>
<dbReference type="GO" id="GO:0005524">
    <property type="term" value="F:ATP binding"/>
    <property type="evidence" value="ECO:0007669"/>
    <property type="project" value="UniProtKB-UniRule"/>
</dbReference>
<dbReference type="GO" id="GO:0019288">
    <property type="term" value="P:isopentenyl diphosphate biosynthetic process, methylerythritol 4-phosphate pathway"/>
    <property type="evidence" value="ECO:0007669"/>
    <property type="project" value="UniProtKB-UniRule"/>
</dbReference>
<dbReference type="GO" id="GO:0016114">
    <property type="term" value="P:terpenoid biosynthetic process"/>
    <property type="evidence" value="ECO:0007669"/>
    <property type="project" value="InterPro"/>
</dbReference>
<dbReference type="Gene3D" id="3.30.230.10">
    <property type="match status" value="1"/>
</dbReference>
<dbReference type="Gene3D" id="3.30.70.890">
    <property type="entry name" value="GHMP kinase, C-terminal domain"/>
    <property type="match status" value="1"/>
</dbReference>
<dbReference type="HAMAP" id="MF_00061">
    <property type="entry name" value="IspE"/>
    <property type="match status" value="1"/>
</dbReference>
<dbReference type="InterPro" id="IPR013750">
    <property type="entry name" value="GHMP_kinase_C_dom"/>
</dbReference>
<dbReference type="InterPro" id="IPR036554">
    <property type="entry name" value="GHMP_kinase_C_sf"/>
</dbReference>
<dbReference type="InterPro" id="IPR006204">
    <property type="entry name" value="GHMP_kinase_N_dom"/>
</dbReference>
<dbReference type="InterPro" id="IPR004424">
    <property type="entry name" value="IspE"/>
</dbReference>
<dbReference type="InterPro" id="IPR020568">
    <property type="entry name" value="Ribosomal_Su5_D2-typ_SF"/>
</dbReference>
<dbReference type="InterPro" id="IPR014721">
    <property type="entry name" value="Ribsml_uS5_D2-typ_fold_subgr"/>
</dbReference>
<dbReference type="NCBIfam" id="TIGR00154">
    <property type="entry name" value="ispE"/>
    <property type="match status" value="1"/>
</dbReference>
<dbReference type="PANTHER" id="PTHR43527">
    <property type="entry name" value="4-DIPHOSPHOCYTIDYL-2-C-METHYL-D-ERYTHRITOL KINASE, CHLOROPLASTIC"/>
    <property type="match status" value="1"/>
</dbReference>
<dbReference type="PANTHER" id="PTHR43527:SF2">
    <property type="entry name" value="4-DIPHOSPHOCYTIDYL-2-C-METHYL-D-ERYTHRITOL KINASE, CHLOROPLASTIC"/>
    <property type="match status" value="1"/>
</dbReference>
<dbReference type="Pfam" id="PF08544">
    <property type="entry name" value="GHMP_kinases_C"/>
    <property type="match status" value="1"/>
</dbReference>
<dbReference type="Pfam" id="PF00288">
    <property type="entry name" value="GHMP_kinases_N"/>
    <property type="match status" value="1"/>
</dbReference>
<dbReference type="PIRSF" id="PIRSF010376">
    <property type="entry name" value="IspE"/>
    <property type="match status" value="1"/>
</dbReference>
<dbReference type="SUPFAM" id="SSF55060">
    <property type="entry name" value="GHMP Kinase, C-terminal domain"/>
    <property type="match status" value="1"/>
</dbReference>
<dbReference type="SUPFAM" id="SSF54211">
    <property type="entry name" value="Ribosomal protein S5 domain 2-like"/>
    <property type="match status" value="1"/>
</dbReference>
<reference key="1">
    <citation type="journal article" date="2008" name="BMC Genomics">
        <title>The genome sequence of the fish pathogen Aliivibrio salmonicida strain LFI1238 shows extensive evidence of gene decay.</title>
        <authorList>
            <person name="Hjerde E."/>
            <person name="Lorentzen M.S."/>
            <person name="Holden M.T."/>
            <person name="Seeger K."/>
            <person name="Paulsen S."/>
            <person name="Bason N."/>
            <person name="Churcher C."/>
            <person name="Harris D."/>
            <person name="Norbertczak H."/>
            <person name="Quail M.A."/>
            <person name="Sanders S."/>
            <person name="Thurston S."/>
            <person name="Parkhill J."/>
            <person name="Willassen N.P."/>
            <person name="Thomson N.R."/>
        </authorList>
    </citation>
    <scope>NUCLEOTIDE SEQUENCE [LARGE SCALE GENOMIC DNA]</scope>
    <source>
        <strain>LFI1238</strain>
    </source>
</reference>
<proteinExistence type="inferred from homology"/>
<accession>B6EHH2</accession>
<keyword id="KW-0067">ATP-binding</keyword>
<keyword id="KW-0414">Isoprene biosynthesis</keyword>
<keyword id="KW-0418">Kinase</keyword>
<keyword id="KW-0547">Nucleotide-binding</keyword>
<keyword id="KW-0808">Transferase</keyword>
<name>ISPE_ALISL</name>
<protein>
    <recommendedName>
        <fullName evidence="1">4-diphosphocytidyl-2-C-methyl-D-erythritol kinase</fullName>
        <shortName evidence="1">CMK</shortName>
        <ecNumber evidence="1">2.7.1.148</ecNumber>
    </recommendedName>
    <alternativeName>
        <fullName evidence="1">4-(cytidine-5'-diphospho)-2-C-methyl-D-erythritol kinase</fullName>
    </alternativeName>
</protein>
<evidence type="ECO:0000255" key="1">
    <source>
        <dbReference type="HAMAP-Rule" id="MF_00061"/>
    </source>
</evidence>
<gene>
    <name evidence="1" type="primary">ispE</name>
    <name type="ordered locus">VSAL_I0787</name>
</gene>
<comment type="function">
    <text evidence="1">Catalyzes the phosphorylation of the position 2 hydroxy group of 4-diphosphocytidyl-2C-methyl-D-erythritol.</text>
</comment>
<comment type="catalytic activity">
    <reaction evidence="1">
        <text>4-CDP-2-C-methyl-D-erythritol + ATP = 4-CDP-2-C-methyl-D-erythritol 2-phosphate + ADP + H(+)</text>
        <dbReference type="Rhea" id="RHEA:18437"/>
        <dbReference type="ChEBI" id="CHEBI:15378"/>
        <dbReference type="ChEBI" id="CHEBI:30616"/>
        <dbReference type="ChEBI" id="CHEBI:57823"/>
        <dbReference type="ChEBI" id="CHEBI:57919"/>
        <dbReference type="ChEBI" id="CHEBI:456216"/>
        <dbReference type="EC" id="2.7.1.148"/>
    </reaction>
</comment>
<comment type="pathway">
    <text evidence="1">Isoprenoid biosynthesis; isopentenyl diphosphate biosynthesis via DXP pathway; isopentenyl diphosphate from 1-deoxy-D-xylulose 5-phosphate: step 3/6.</text>
</comment>
<comment type="similarity">
    <text evidence="1">Belongs to the GHMP kinase family. IspE subfamily.</text>
</comment>
<feature type="chain" id="PRO_1000092057" description="4-diphosphocytidyl-2-C-methyl-D-erythritol kinase">
    <location>
        <begin position="1"/>
        <end position="288"/>
    </location>
</feature>
<feature type="active site" evidence="1">
    <location>
        <position position="13"/>
    </location>
</feature>
<feature type="active site" evidence="1">
    <location>
        <position position="138"/>
    </location>
</feature>
<feature type="binding site" evidence="1">
    <location>
        <begin position="96"/>
        <end position="106"/>
    </location>
    <ligand>
        <name>ATP</name>
        <dbReference type="ChEBI" id="CHEBI:30616"/>
    </ligand>
</feature>